<protein>
    <recommendedName>
        <fullName evidence="1">Small ribosomal subunit protein uS2</fullName>
    </recommendedName>
    <alternativeName>
        <fullName evidence="2">30S ribosomal protein S2</fullName>
    </alternativeName>
</protein>
<name>RS2_BRUSU</name>
<dbReference type="EMBL" id="AE014291">
    <property type="protein sequence ID" value="AAN30082.1"/>
    <property type="molecule type" value="Genomic_DNA"/>
</dbReference>
<dbReference type="EMBL" id="CP002997">
    <property type="protein sequence ID" value="AEM18500.1"/>
    <property type="molecule type" value="Genomic_DNA"/>
</dbReference>
<dbReference type="RefSeq" id="WP_002964289.1">
    <property type="nucleotide sequence ID" value="NZ_KN046804.1"/>
</dbReference>
<dbReference type="SMR" id="Q8G0D6"/>
<dbReference type="GeneID" id="97533588"/>
<dbReference type="KEGG" id="bms:BR1162"/>
<dbReference type="KEGG" id="bsi:BS1330_I1158"/>
<dbReference type="PATRIC" id="fig|204722.22.peg.685"/>
<dbReference type="HOGENOM" id="CLU_040318_2_1_5"/>
<dbReference type="PhylomeDB" id="Q8G0D6"/>
<dbReference type="Proteomes" id="UP000007104">
    <property type="component" value="Chromosome I"/>
</dbReference>
<dbReference type="GO" id="GO:0022627">
    <property type="term" value="C:cytosolic small ribosomal subunit"/>
    <property type="evidence" value="ECO:0007669"/>
    <property type="project" value="TreeGrafter"/>
</dbReference>
<dbReference type="GO" id="GO:0003735">
    <property type="term" value="F:structural constituent of ribosome"/>
    <property type="evidence" value="ECO:0007669"/>
    <property type="project" value="InterPro"/>
</dbReference>
<dbReference type="GO" id="GO:0006412">
    <property type="term" value="P:translation"/>
    <property type="evidence" value="ECO:0007669"/>
    <property type="project" value="UniProtKB-UniRule"/>
</dbReference>
<dbReference type="CDD" id="cd01425">
    <property type="entry name" value="RPS2"/>
    <property type="match status" value="1"/>
</dbReference>
<dbReference type="FunFam" id="1.10.287.610:FF:000001">
    <property type="entry name" value="30S ribosomal protein S2"/>
    <property type="match status" value="1"/>
</dbReference>
<dbReference type="Gene3D" id="3.40.50.10490">
    <property type="entry name" value="Glucose-6-phosphate isomerase like protein, domain 1"/>
    <property type="match status" value="1"/>
</dbReference>
<dbReference type="Gene3D" id="1.10.287.610">
    <property type="entry name" value="Helix hairpin bin"/>
    <property type="match status" value="1"/>
</dbReference>
<dbReference type="HAMAP" id="MF_00291_B">
    <property type="entry name" value="Ribosomal_uS2_B"/>
    <property type="match status" value="1"/>
</dbReference>
<dbReference type="InterPro" id="IPR001865">
    <property type="entry name" value="Ribosomal_uS2"/>
</dbReference>
<dbReference type="InterPro" id="IPR005706">
    <property type="entry name" value="Ribosomal_uS2_bac/mit/plastid"/>
</dbReference>
<dbReference type="InterPro" id="IPR018130">
    <property type="entry name" value="Ribosomal_uS2_CS"/>
</dbReference>
<dbReference type="InterPro" id="IPR023591">
    <property type="entry name" value="Ribosomal_uS2_flav_dom_sf"/>
</dbReference>
<dbReference type="NCBIfam" id="TIGR01011">
    <property type="entry name" value="rpsB_bact"/>
    <property type="match status" value="1"/>
</dbReference>
<dbReference type="PANTHER" id="PTHR12534">
    <property type="entry name" value="30S RIBOSOMAL PROTEIN S2 PROKARYOTIC AND ORGANELLAR"/>
    <property type="match status" value="1"/>
</dbReference>
<dbReference type="PANTHER" id="PTHR12534:SF0">
    <property type="entry name" value="SMALL RIBOSOMAL SUBUNIT PROTEIN US2M"/>
    <property type="match status" value="1"/>
</dbReference>
<dbReference type="Pfam" id="PF00318">
    <property type="entry name" value="Ribosomal_S2"/>
    <property type="match status" value="1"/>
</dbReference>
<dbReference type="PRINTS" id="PR00395">
    <property type="entry name" value="RIBOSOMALS2"/>
</dbReference>
<dbReference type="SUPFAM" id="SSF52313">
    <property type="entry name" value="Ribosomal protein S2"/>
    <property type="match status" value="1"/>
</dbReference>
<dbReference type="PROSITE" id="PS00962">
    <property type="entry name" value="RIBOSOMAL_S2_1"/>
    <property type="match status" value="1"/>
</dbReference>
<dbReference type="PROSITE" id="PS00963">
    <property type="entry name" value="RIBOSOMAL_S2_2"/>
    <property type="match status" value="1"/>
</dbReference>
<keyword id="KW-0687">Ribonucleoprotein</keyword>
<keyword id="KW-0689">Ribosomal protein</keyword>
<accession>Q8G0D6</accession>
<accession>G0KA84</accession>
<reference key="1">
    <citation type="journal article" date="2002" name="Proc. Natl. Acad. Sci. U.S.A.">
        <title>The Brucella suis genome reveals fundamental similarities between animal and plant pathogens and symbionts.</title>
        <authorList>
            <person name="Paulsen I.T."/>
            <person name="Seshadri R."/>
            <person name="Nelson K.E."/>
            <person name="Eisen J.A."/>
            <person name="Heidelberg J.F."/>
            <person name="Read T.D."/>
            <person name="Dodson R.J."/>
            <person name="Umayam L.A."/>
            <person name="Brinkac L.M."/>
            <person name="Beanan M.J."/>
            <person name="Daugherty S.C."/>
            <person name="DeBoy R.T."/>
            <person name="Durkin A.S."/>
            <person name="Kolonay J.F."/>
            <person name="Madupu R."/>
            <person name="Nelson W.C."/>
            <person name="Ayodeji B."/>
            <person name="Kraul M."/>
            <person name="Shetty J."/>
            <person name="Malek J.A."/>
            <person name="Van Aken S.E."/>
            <person name="Riedmuller S."/>
            <person name="Tettelin H."/>
            <person name="Gill S.R."/>
            <person name="White O."/>
            <person name="Salzberg S.L."/>
            <person name="Hoover D.L."/>
            <person name="Lindler L.E."/>
            <person name="Halling S.M."/>
            <person name="Boyle S.M."/>
            <person name="Fraser C.M."/>
        </authorList>
    </citation>
    <scope>NUCLEOTIDE SEQUENCE [LARGE SCALE GENOMIC DNA]</scope>
    <source>
        <strain>1330</strain>
    </source>
</reference>
<reference key="2">
    <citation type="journal article" date="2011" name="J. Bacteriol.">
        <title>Revised genome sequence of Brucella suis 1330.</title>
        <authorList>
            <person name="Tae H."/>
            <person name="Shallom S."/>
            <person name="Settlage R."/>
            <person name="Preston D."/>
            <person name="Adams L.G."/>
            <person name="Garner H.R."/>
        </authorList>
    </citation>
    <scope>NUCLEOTIDE SEQUENCE [LARGE SCALE GENOMIC DNA]</scope>
    <source>
        <strain>1330</strain>
    </source>
</reference>
<comment type="similarity">
    <text evidence="1">Belongs to the universal ribosomal protein uS2 family.</text>
</comment>
<gene>
    <name evidence="1" type="primary">rpsB</name>
    <name type="ordered locus">BR1162</name>
    <name type="ordered locus">BS1330_I1158</name>
</gene>
<sequence length="256" mass="27999">MALPDFSMRQLLEAGVHFGHQTHRWNPKMAPFIYGERNNIHILDLSQTVPLLNSALKVVSDTVARGGRVLFVGTKRQASDIIADAANRSAQYYVNARWLGGMMTNWKTISNSIQRLRKLDELLAGEAQGFTKKERLNLEREREKLDRALGGIKDMGSVPDLMFIIDTNKEAIAIQEAKRLGIPVVAVIDSNCDPDQIDYPIPGNDDAARAIALYCDLIARAALDGIARQQGAMGIDVGAQVEAPVEPALQAPAEGA</sequence>
<organism>
    <name type="scientific">Brucella suis biovar 1 (strain 1330)</name>
    <dbReference type="NCBI Taxonomy" id="204722"/>
    <lineage>
        <taxon>Bacteria</taxon>
        <taxon>Pseudomonadati</taxon>
        <taxon>Pseudomonadota</taxon>
        <taxon>Alphaproteobacteria</taxon>
        <taxon>Hyphomicrobiales</taxon>
        <taxon>Brucellaceae</taxon>
        <taxon>Brucella/Ochrobactrum group</taxon>
        <taxon>Brucella</taxon>
    </lineage>
</organism>
<evidence type="ECO:0000255" key="1">
    <source>
        <dbReference type="HAMAP-Rule" id="MF_00291"/>
    </source>
</evidence>
<evidence type="ECO:0000305" key="2"/>
<feature type="chain" id="PRO_0000134141" description="Small ribosomal subunit protein uS2">
    <location>
        <begin position="1"/>
        <end position="256"/>
    </location>
</feature>
<proteinExistence type="inferred from homology"/>